<evidence type="ECO:0000255" key="1">
    <source>
        <dbReference type="HAMAP-Rule" id="MF_02076"/>
    </source>
</evidence>
<evidence type="ECO:0007829" key="2">
    <source>
        <dbReference type="PDB" id="3AII"/>
    </source>
</evidence>
<organism>
    <name type="scientific">Methanothermobacter thermautotrophicus (strain ATCC 29096 / DSM 1053 / JCM 10044 / NBRC 100330 / Delta H)</name>
    <name type="common">Methanobacterium thermoautotrophicum</name>
    <dbReference type="NCBI Taxonomy" id="187420"/>
    <lineage>
        <taxon>Archaea</taxon>
        <taxon>Methanobacteriati</taxon>
        <taxon>Methanobacteriota</taxon>
        <taxon>Methanomada group</taxon>
        <taxon>Methanobacteria</taxon>
        <taxon>Methanobacteriales</taxon>
        <taxon>Methanobacteriaceae</taxon>
        <taxon>Methanothermobacter</taxon>
    </lineage>
</organism>
<name>SYE_METTH</name>
<accession>O26157</accession>
<proteinExistence type="evidence at protein level"/>
<sequence>MVPVEDLVYRYALLNAVKHRGRANPGAVMGAVMSNEPELRKMAPQVKEAVEAAVERVNSLSPEEQQQEMERLGLEITERKQKKRKGLRELAGVKGEVVLRFAPNPSGPLHIGHARAAILNHEYARKYDGRLILRIEDTDPRRVDPEAYDMIPADLEWLGVEWDETVIQSDRMETYYEYTEKLIERGGAYVCTCRPEEFRELKNRGEACHCRSLGFRENLQRWREMFEMKEGSAVVRVKTDLNHPNPAIRDWVSMRIVEAEHPRTGTRYRVYPMMNFSVAVDDHLLGVTHVLRGKDHLANREKQEYLYRHLGWEPPEFIHYGRLKMDDVALSTSGAREGILRGEYSGWDDPRLGTLRAIARRGIRPEAIRKLMVEIGVKIADSTMSWKKIYGLNRSILEEEARRYFFAADPVKLEVVGLPGPVRVERPLHPDHPEIGNRVLELRGEVYLPGDDLGEGPLRLIDAVNVIYSGGELRYHSEGIEEARELGASMIHWVPAESALEAEVIMPDASRVRGVIEADASELEVDDVVQLERFGFARLDSAGPGMVFYYAHK</sequence>
<keyword id="KW-0002">3D-structure</keyword>
<keyword id="KW-0030">Aminoacyl-tRNA synthetase</keyword>
<keyword id="KW-0067">ATP-binding</keyword>
<keyword id="KW-0963">Cytoplasm</keyword>
<keyword id="KW-0436">Ligase</keyword>
<keyword id="KW-0547">Nucleotide-binding</keyword>
<keyword id="KW-0648">Protein biosynthesis</keyword>
<keyword id="KW-1185">Reference proteome</keyword>
<gene>
    <name evidence="1" type="primary">gltX</name>
    <name type="ordered locus">MTH_51</name>
</gene>
<comment type="function">
    <text evidence="1">Catalyzes the attachment of glutamate to tRNA(Glu) in a two-step reaction: glutamate is first activated by ATP to form Glu-AMP and then transferred to the acceptor end of tRNA(Glu).</text>
</comment>
<comment type="catalytic activity">
    <reaction evidence="1">
        <text>tRNA(Glu) + L-glutamate + ATP = L-glutamyl-tRNA(Glu) + AMP + diphosphate</text>
        <dbReference type="Rhea" id="RHEA:23540"/>
        <dbReference type="Rhea" id="RHEA-COMP:9663"/>
        <dbReference type="Rhea" id="RHEA-COMP:9680"/>
        <dbReference type="ChEBI" id="CHEBI:29985"/>
        <dbReference type="ChEBI" id="CHEBI:30616"/>
        <dbReference type="ChEBI" id="CHEBI:33019"/>
        <dbReference type="ChEBI" id="CHEBI:78442"/>
        <dbReference type="ChEBI" id="CHEBI:78520"/>
        <dbReference type="ChEBI" id="CHEBI:456215"/>
        <dbReference type="EC" id="6.1.1.17"/>
    </reaction>
</comment>
<comment type="subcellular location">
    <subcellularLocation>
        <location evidence="1">Cytoplasm</location>
    </subcellularLocation>
</comment>
<comment type="similarity">
    <text evidence="1">Belongs to the class-I aminoacyl-tRNA synthetase family. Glutamate--tRNA ligase type 2 subfamily.</text>
</comment>
<protein>
    <recommendedName>
        <fullName evidence="1">Glutamate--tRNA ligase</fullName>
        <ecNumber evidence="1">6.1.1.17</ecNumber>
    </recommendedName>
    <alternativeName>
        <fullName evidence="1">Glutamyl-tRNA synthetase</fullName>
        <shortName evidence="1">GluRS</shortName>
    </alternativeName>
</protein>
<dbReference type="EC" id="6.1.1.17" evidence="1"/>
<dbReference type="EMBL" id="AE000666">
    <property type="protein sequence ID" value="AAB84558.1"/>
    <property type="molecule type" value="Genomic_DNA"/>
</dbReference>
<dbReference type="PIR" id="B69167">
    <property type="entry name" value="B69167"/>
</dbReference>
<dbReference type="RefSeq" id="WP_010875691.1">
    <property type="nucleotide sequence ID" value="NC_000916.1"/>
</dbReference>
<dbReference type="PDB" id="3AII">
    <property type="method" value="X-ray"/>
    <property type="resolution" value="1.65 A"/>
    <property type="chains" value="A=1-553"/>
</dbReference>
<dbReference type="PDBsum" id="3AII"/>
<dbReference type="SMR" id="O26157"/>
<dbReference type="FunCoup" id="O26157">
    <property type="interactions" value="295"/>
</dbReference>
<dbReference type="STRING" id="187420.MTH_51"/>
<dbReference type="PaxDb" id="187420-MTH_51"/>
<dbReference type="EnsemblBacteria" id="AAB84558">
    <property type="protein sequence ID" value="AAB84558"/>
    <property type="gene ID" value="MTH_51"/>
</dbReference>
<dbReference type="GeneID" id="1470013"/>
<dbReference type="KEGG" id="mth:MTH_51"/>
<dbReference type="PATRIC" id="fig|187420.15.peg.49"/>
<dbReference type="HOGENOM" id="CLU_001882_1_3_2"/>
<dbReference type="InParanoid" id="O26157"/>
<dbReference type="BRENDA" id="6.1.1.17">
    <property type="organism ID" value="7219"/>
</dbReference>
<dbReference type="EvolutionaryTrace" id="O26157"/>
<dbReference type="Proteomes" id="UP000005223">
    <property type="component" value="Chromosome"/>
</dbReference>
<dbReference type="GO" id="GO:0005829">
    <property type="term" value="C:cytosol"/>
    <property type="evidence" value="ECO:0007669"/>
    <property type="project" value="TreeGrafter"/>
</dbReference>
<dbReference type="GO" id="GO:0032991">
    <property type="term" value="C:protein-containing complex"/>
    <property type="evidence" value="ECO:0007669"/>
    <property type="project" value="UniProtKB-ARBA"/>
</dbReference>
<dbReference type="GO" id="GO:0005524">
    <property type="term" value="F:ATP binding"/>
    <property type="evidence" value="ECO:0007669"/>
    <property type="project" value="UniProtKB-UniRule"/>
</dbReference>
<dbReference type="GO" id="GO:0004818">
    <property type="term" value="F:glutamate-tRNA ligase activity"/>
    <property type="evidence" value="ECO:0007669"/>
    <property type="project" value="UniProtKB-UniRule"/>
</dbReference>
<dbReference type="GO" id="GO:0043604">
    <property type="term" value="P:amide biosynthetic process"/>
    <property type="evidence" value="ECO:0007669"/>
    <property type="project" value="TreeGrafter"/>
</dbReference>
<dbReference type="GO" id="GO:0006424">
    <property type="term" value="P:glutamyl-tRNA aminoacylation"/>
    <property type="evidence" value="ECO:0007669"/>
    <property type="project" value="UniProtKB-UniRule"/>
</dbReference>
<dbReference type="CDD" id="cd09287">
    <property type="entry name" value="GluRS_non_core"/>
    <property type="match status" value="1"/>
</dbReference>
<dbReference type="Gene3D" id="2.40.240.100">
    <property type="match status" value="1"/>
</dbReference>
<dbReference type="Gene3D" id="3.40.50.620">
    <property type="entry name" value="HUPs"/>
    <property type="match status" value="1"/>
</dbReference>
<dbReference type="Gene3D" id="2.40.240.10">
    <property type="entry name" value="Ribosomal Protein L25, Chain P"/>
    <property type="match status" value="1"/>
</dbReference>
<dbReference type="HAMAP" id="MF_02076">
    <property type="entry name" value="Glu_tRNA_synth_type2"/>
    <property type="match status" value="1"/>
</dbReference>
<dbReference type="InterPro" id="IPR001412">
    <property type="entry name" value="aa-tRNA-synth_I_CS"/>
</dbReference>
<dbReference type="InterPro" id="IPR050132">
    <property type="entry name" value="Gln/Glu-tRNA_Ligase"/>
</dbReference>
<dbReference type="InterPro" id="IPR004526">
    <property type="entry name" value="Glu-tRNA-synth_arc/euk"/>
</dbReference>
<dbReference type="InterPro" id="IPR000924">
    <property type="entry name" value="Glu/Gln-tRNA-synth"/>
</dbReference>
<dbReference type="InterPro" id="IPR020058">
    <property type="entry name" value="Glu/Gln-tRNA-synth_Ib_cat-dom"/>
</dbReference>
<dbReference type="InterPro" id="IPR020059">
    <property type="entry name" value="Glu/Gln-tRNA-synth_Ib_codon-bd"/>
</dbReference>
<dbReference type="InterPro" id="IPR020056">
    <property type="entry name" value="Rbsml_bL25/Gln-tRNA_synth_N"/>
</dbReference>
<dbReference type="InterPro" id="IPR011035">
    <property type="entry name" value="Ribosomal_bL25/Gln-tRNA_synth"/>
</dbReference>
<dbReference type="InterPro" id="IPR014729">
    <property type="entry name" value="Rossmann-like_a/b/a_fold"/>
</dbReference>
<dbReference type="InterPro" id="IPR049437">
    <property type="entry name" value="tRNA-synt_1c_C2"/>
</dbReference>
<dbReference type="NCBIfam" id="TIGR00463">
    <property type="entry name" value="gltX_arch"/>
    <property type="match status" value="1"/>
</dbReference>
<dbReference type="NCBIfam" id="NF003169">
    <property type="entry name" value="PRK04156.1"/>
    <property type="match status" value="1"/>
</dbReference>
<dbReference type="PANTHER" id="PTHR43097:SF5">
    <property type="entry name" value="GLUTAMATE--TRNA LIGASE"/>
    <property type="match status" value="1"/>
</dbReference>
<dbReference type="PANTHER" id="PTHR43097">
    <property type="entry name" value="GLUTAMINE-TRNA LIGASE"/>
    <property type="match status" value="1"/>
</dbReference>
<dbReference type="Pfam" id="PF00749">
    <property type="entry name" value="tRNA-synt_1c"/>
    <property type="match status" value="1"/>
</dbReference>
<dbReference type="Pfam" id="PF03950">
    <property type="entry name" value="tRNA-synt_1c_C"/>
    <property type="match status" value="1"/>
</dbReference>
<dbReference type="Pfam" id="PF20974">
    <property type="entry name" value="tRNA-synt_1c_C2"/>
    <property type="match status" value="1"/>
</dbReference>
<dbReference type="PRINTS" id="PR00987">
    <property type="entry name" value="TRNASYNTHGLU"/>
</dbReference>
<dbReference type="SUPFAM" id="SSF52374">
    <property type="entry name" value="Nucleotidylyl transferase"/>
    <property type="match status" value="1"/>
</dbReference>
<dbReference type="SUPFAM" id="SSF50715">
    <property type="entry name" value="Ribosomal protein L25-like"/>
    <property type="match status" value="1"/>
</dbReference>
<dbReference type="PROSITE" id="PS00178">
    <property type="entry name" value="AA_TRNA_LIGASE_I"/>
    <property type="match status" value="1"/>
</dbReference>
<reference key="1">
    <citation type="journal article" date="1997" name="J. Bacteriol.">
        <title>Complete genome sequence of Methanobacterium thermoautotrophicum deltaH: functional analysis and comparative genomics.</title>
        <authorList>
            <person name="Smith D.R."/>
            <person name="Doucette-Stamm L.A."/>
            <person name="Deloughery C."/>
            <person name="Lee H.-M."/>
            <person name="Dubois J."/>
            <person name="Aldredge T."/>
            <person name="Bashirzadeh R."/>
            <person name="Blakely D."/>
            <person name="Cook R."/>
            <person name="Gilbert K."/>
            <person name="Harrison D."/>
            <person name="Hoang L."/>
            <person name="Keagle P."/>
            <person name="Lumm W."/>
            <person name="Pothier B."/>
            <person name="Qiu D."/>
            <person name="Spadafora R."/>
            <person name="Vicare R."/>
            <person name="Wang Y."/>
            <person name="Wierzbowski J."/>
            <person name="Gibson R."/>
            <person name="Jiwani N."/>
            <person name="Caruso A."/>
            <person name="Bush D."/>
            <person name="Safer H."/>
            <person name="Patwell D."/>
            <person name="Prabhakar S."/>
            <person name="McDougall S."/>
            <person name="Shimer G."/>
            <person name="Goyal A."/>
            <person name="Pietrovski S."/>
            <person name="Church G.M."/>
            <person name="Daniels C.J."/>
            <person name="Mao J.-I."/>
            <person name="Rice P."/>
            <person name="Noelling J."/>
            <person name="Reeve J.N."/>
        </authorList>
    </citation>
    <scope>NUCLEOTIDE SEQUENCE [LARGE SCALE GENOMIC DNA]</scope>
    <source>
        <strain>ATCC 29096 / DSM 1053 / JCM 10044 / NBRC 100330 / Delta H</strain>
    </source>
</reference>
<feature type="chain" id="PRO_0000119721" description="Glutamate--tRNA ligase">
    <location>
        <begin position="1"/>
        <end position="553"/>
    </location>
</feature>
<feature type="short sequence motif" description="'HIGH' region" evidence="1">
    <location>
        <begin position="103"/>
        <end position="113"/>
    </location>
</feature>
<feature type="strand" evidence="2">
    <location>
        <begin position="98"/>
        <end position="101"/>
    </location>
</feature>
<feature type="strand" evidence="2">
    <location>
        <begin position="105"/>
        <end position="108"/>
    </location>
</feature>
<feature type="helix" evidence="2">
    <location>
        <begin position="111"/>
        <end position="126"/>
    </location>
</feature>
<feature type="strand" evidence="2">
    <location>
        <begin position="130"/>
        <end position="135"/>
    </location>
</feature>
<feature type="helix" evidence="2">
    <location>
        <begin position="140"/>
        <end position="142"/>
    </location>
</feature>
<feature type="helix" evidence="2">
    <location>
        <begin position="147"/>
        <end position="158"/>
    </location>
</feature>
<feature type="strand" evidence="2">
    <location>
        <begin position="163"/>
        <end position="167"/>
    </location>
</feature>
<feature type="helix" evidence="2">
    <location>
        <begin position="168"/>
        <end position="171"/>
    </location>
</feature>
<feature type="helix" evidence="2">
    <location>
        <begin position="172"/>
        <end position="184"/>
    </location>
</feature>
<feature type="strand" evidence="2">
    <location>
        <begin position="187"/>
        <end position="191"/>
    </location>
</feature>
<feature type="helix" evidence="2">
    <location>
        <begin position="195"/>
        <end position="203"/>
    </location>
</feature>
<feature type="helix" evidence="2">
    <location>
        <begin position="209"/>
        <end position="212"/>
    </location>
</feature>
<feature type="helix" evidence="2">
    <location>
        <begin position="215"/>
        <end position="224"/>
    </location>
</feature>
<feature type="helix" evidence="2">
    <location>
        <begin position="225"/>
        <end position="227"/>
    </location>
</feature>
<feature type="strand" evidence="2">
    <location>
        <begin position="234"/>
        <end position="237"/>
    </location>
</feature>
<feature type="helix" evidence="2">
    <location>
        <begin position="246"/>
        <end position="248"/>
    </location>
</feature>
<feature type="strand" evidence="2">
    <location>
        <begin position="252"/>
        <end position="256"/>
    </location>
</feature>
<feature type="turn" evidence="2">
    <location>
        <begin position="262"/>
        <end position="264"/>
    </location>
</feature>
<feature type="strand" evidence="2">
    <location>
        <begin position="270"/>
        <end position="272"/>
    </location>
</feature>
<feature type="helix" evidence="2">
    <location>
        <begin position="274"/>
        <end position="284"/>
    </location>
</feature>
<feature type="strand" evidence="2">
    <location>
        <begin position="289"/>
        <end position="292"/>
    </location>
</feature>
<feature type="helix" evidence="2">
    <location>
        <begin position="299"/>
        <end position="310"/>
    </location>
</feature>
<feature type="strand" evidence="2">
    <location>
        <begin position="316"/>
        <end position="319"/>
    </location>
</feature>
<feature type="helix" evidence="2">
    <location>
        <begin position="333"/>
        <end position="341"/>
    </location>
</feature>
<feature type="helix" evidence="2">
    <location>
        <begin position="355"/>
        <end position="360"/>
    </location>
</feature>
<feature type="helix" evidence="2">
    <location>
        <begin position="365"/>
        <end position="375"/>
    </location>
</feature>
<feature type="helix" evidence="2">
    <location>
        <begin position="386"/>
        <end position="397"/>
    </location>
</feature>
<feature type="turn" evidence="2">
    <location>
        <begin position="398"/>
        <end position="400"/>
    </location>
</feature>
<feature type="strand" evidence="2">
    <location>
        <begin position="402"/>
        <end position="404"/>
    </location>
</feature>
<feature type="strand" evidence="2">
    <location>
        <begin position="406"/>
        <end position="416"/>
    </location>
</feature>
<feature type="strand" evidence="2">
    <location>
        <begin position="422"/>
        <end position="428"/>
    </location>
</feature>
<feature type="helix" evidence="2">
    <location>
        <begin position="433"/>
        <end position="435"/>
    </location>
</feature>
<feature type="strand" evidence="2">
    <location>
        <begin position="437"/>
        <end position="449"/>
    </location>
</feature>
<feature type="strand" evidence="2">
    <location>
        <begin position="455"/>
        <end position="460"/>
    </location>
</feature>
<feature type="turn" evidence="2">
    <location>
        <begin position="461"/>
        <end position="463"/>
    </location>
</feature>
<feature type="strand" evidence="2">
    <location>
        <begin position="464"/>
        <end position="469"/>
    </location>
</feature>
<feature type="strand" evidence="2">
    <location>
        <begin position="472"/>
        <end position="477"/>
    </location>
</feature>
<feature type="helix" evidence="2">
    <location>
        <begin position="480"/>
        <end position="486"/>
    </location>
</feature>
<feature type="strand" evidence="2">
    <location>
        <begin position="489"/>
        <end position="491"/>
    </location>
</feature>
<feature type="helix" evidence="2">
    <location>
        <begin position="496"/>
        <end position="498"/>
    </location>
</feature>
<feature type="strand" evidence="2">
    <location>
        <begin position="500"/>
        <end position="505"/>
    </location>
</feature>
<feature type="strand" evidence="2">
    <location>
        <begin position="511"/>
        <end position="516"/>
    </location>
</feature>
<feature type="helix" evidence="2">
    <location>
        <begin position="518"/>
        <end position="522"/>
    </location>
</feature>
<feature type="strand" evidence="2">
    <location>
        <begin position="528"/>
        <end position="531"/>
    </location>
</feature>
<feature type="turn" evidence="2">
    <location>
        <begin position="532"/>
        <end position="534"/>
    </location>
</feature>
<feature type="strand" evidence="2">
    <location>
        <begin position="535"/>
        <end position="541"/>
    </location>
</feature>
<feature type="strand" evidence="2">
    <location>
        <begin position="543"/>
        <end position="552"/>
    </location>
</feature>